<gene>
    <name evidence="1" type="primary">truA</name>
    <name type="ordered locus">ABBFA_003111</name>
</gene>
<reference key="1">
    <citation type="journal article" date="2008" name="J. Bacteriol.">
        <title>Comparative genome sequence analysis of multidrug-resistant Acinetobacter baumannii.</title>
        <authorList>
            <person name="Adams M.D."/>
            <person name="Goglin K."/>
            <person name="Molyneaux N."/>
            <person name="Hujer K.M."/>
            <person name="Lavender H."/>
            <person name="Jamison J.J."/>
            <person name="MacDonald I.J."/>
            <person name="Martin K.M."/>
            <person name="Russo T."/>
            <person name="Campagnari A.A."/>
            <person name="Hujer A.M."/>
            <person name="Bonomo R.A."/>
            <person name="Gill S.R."/>
        </authorList>
    </citation>
    <scope>NUCLEOTIDE SEQUENCE [LARGE SCALE GENOMIC DNA]</scope>
    <source>
        <strain>AB307-0294</strain>
    </source>
</reference>
<sequence length="265" mass="30351">MQRYAVGIEFSGIQYRGWQTQQPGVASVQETIERVLSKIADEPITLHGAGRTDAGVHATNMVAHFDTTAIRPERGWIMGANSQLPKDISIQWIKQMDEEFHARFKATARRYRYVVYNAPHRPALLHKQVTHIYQKLDVQKMIKAASKFEGTHNFETFRAAACQSNQPVRHVKHCRLFQHGRYLVLDIQADGFLHHMVRNIMGCLLEIGQGMYEIDHIDTMFAAEDRKAAGITAPPDGLYFIQCYYPEQFDLPQPPLGPHWLNLPE</sequence>
<accession>B7H0S9</accession>
<organism>
    <name type="scientific">Acinetobacter baumannii (strain AB307-0294)</name>
    <dbReference type="NCBI Taxonomy" id="557600"/>
    <lineage>
        <taxon>Bacteria</taxon>
        <taxon>Pseudomonadati</taxon>
        <taxon>Pseudomonadota</taxon>
        <taxon>Gammaproteobacteria</taxon>
        <taxon>Moraxellales</taxon>
        <taxon>Moraxellaceae</taxon>
        <taxon>Acinetobacter</taxon>
        <taxon>Acinetobacter calcoaceticus/baumannii complex</taxon>
    </lineage>
</organism>
<keyword id="KW-0413">Isomerase</keyword>
<keyword id="KW-0819">tRNA processing</keyword>
<dbReference type="EC" id="5.4.99.12" evidence="1"/>
<dbReference type="EMBL" id="CP001172">
    <property type="protein sequence ID" value="ACJ58778.1"/>
    <property type="molecule type" value="Genomic_DNA"/>
</dbReference>
<dbReference type="RefSeq" id="WP_001190110.1">
    <property type="nucleotide sequence ID" value="NZ_CP001172.1"/>
</dbReference>
<dbReference type="SMR" id="B7H0S9"/>
<dbReference type="HOGENOM" id="CLU_014673_0_2_6"/>
<dbReference type="Proteomes" id="UP000006924">
    <property type="component" value="Chromosome"/>
</dbReference>
<dbReference type="GO" id="GO:0003723">
    <property type="term" value="F:RNA binding"/>
    <property type="evidence" value="ECO:0007669"/>
    <property type="project" value="InterPro"/>
</dbReference>
<dbReference type="GO" id="GO:0160147">
    <property type="term" value="F:tRNA pseudouridine(38-40) synthase activity"/>
    <property type="evidence" value="ECO:0007669"/>
    <property type="project" value="UniProtKB-EC"/>
</dbReference>
<dbReference type="GO" id="GO:0031119">
    <property type="term" value="P:tRNA pseudouridine synthesis"/>
    <property type="evidence" value="ECO:0007669"/>
    <property type="project" value="UniProtKB-UniRule"/>
</dbReference>
<dbReference type="CDD" id="cd02570">
    <property type="entry name" value="PseudoU_synth_EcTruA"/>
    <property type="match status" value="1"/>
</dbReference>
<dbReference type="FunFam" id="3.30.70.580:FF:000001">
    <property type="entry name" value="tRNA pseudouridine synthase A"/>
    <property type="match status" value="1"/>
</dbReference>
<dbReference type="Gene3D" id="3.30.70.660">
    <property type="entry name" value="Pseudouridine synthase I, catalytic domain, C-terminal subdomain"/>
    <property type="match status" value="1"/>
</dbReference>
<dbReference type="Gene3D" id="3.30.70.580">
    <property type="entry name" value="Pseudouridine synthase I, catalytic domain, N-terminal subdomain"/>
    <property type="match status" value="1"/>
</dbReference>
<dbReference type="HAMAP" id="MF_00171">
    <property type="entry name" value="TruA"/>
    <property type="match status" value="1"/>
</dbReference>
<dbReference type="InterPro" id="IPR020103">
    <property type="entry name" value="PsdUridine_synth_cat_dom_sf"/>
</dbReference>
<dbReference type="InterPro" id="IPR001406">
    <property type="entry name" value="PsdUridine_synth_TruA"/>
</dbReference>
<dbReference type="InterPro" id="IPR020097">
    <property type="entry name" value="PsdUridine_synth_TruA_a/b_dom"/>
</dbReference>
<dbReference type="InterPro" id="IPR020095">
    <property type="entry name" value="PsdUridine_synth_TruA_C"/>
</dbReference>
<dbReference type="InterPro" id="IPR020094">
    <property type="entry name" value="TruA/RsuA/RluB/E/F_N"/>
</dbReference>
<dbReference type="NCBIfam" id="TIGR00071">
    <property type="entry name" value="hisT_truA"/>
    <property type="match status" value="1"/>
</dbReference>
<dbReference type="PANTHER" id="PTHR11142">
    <property type="entry name" value="PSEUDOURIDYLATE SYNTHASE"/>
    <property type="match status" value="1"/>
</dbReference>
<dbReference type="PANTHER" id="PTHR11142:SF0">
    <property type="entry name" value="TRNA PSEUDOURIDINE SYNTHASE-LIKE 1"/>
    <property type="match status" value="1"/>
</dbReference>
<dbReference type="Pfam" id="PF01416">
    <property type="entry name" value="PseudoU_synth_1"/>
    <property type="match status" value="2"/>
</dbReference>
<dbReference type="PIRSF" id="PIRSF001430">
    <property type="entry name" value="tRNA_psdUrid_synth"/>
    <property type="match status" value="1"/>
</dbReference>
<dbReference type="SUPFAM" id="SSF55120">
    <property type="entry name" value="Pseudouridine synthase"/>
    <property type="match status" value="1"/>
</dbReference>
<name>TRUA_ACIB3</name>
<protein>
    <recommendedName>
        <fullName evidence="1">tRNA pseudouridine synthase A</fullName>
        <ecNumber evidence="1">5.4.99.12</ecNumber>
    </recommendedName>
    <alternativeName>
        <fullName evidence="1">tRNA pseudouridine(38-40) synthase</fullName>
    </alternativeName>
    <alternativeName>
        <fullName evidence="1">tRNA pseudouridylate synthase I</fullName>
    </alternativeName>
    <alternativeName>
        <fullName evidence="1">tRNA-uridine isomerase I</fullName>
    </alternativeName>
</protein>
<feature type="chain" id="PRO_1000194523" description="tRNA pseudouridine synthase A">
    <location>
        <begin position="1"/>
        <end position="265"/>
    </location>
</feature>
<feature type="active site" description="Nucleophile" evidence="1">
    <location>
        <position position="53"/>
    </location>
</feature>
<feature type="binding site" evidence="1">
    <location>
        <position position="111"/>
    </location>
    <ligand>
        <name>substrate</name>
    </ligand>
</feature>
<comment type="function">
    <text evidence="1">Formation of pseudouridine at positions 38, 39 and 40 in the anticodon stem and loop of transfer RNAs.</text>
</comment>
<comment type="catalytic activity">
    <reaction evidence="1">
        <text>uridine(38/39/40) in tRNA = pseudouridine(38/39/40) in tRNA</text>
        <dbReference type="Rhea" id="RHEA:22376"/>
        <dbReference type="Rhea" id="RHEA-COMP:10085"/>
        <dbReference type="Rhea" id="RHEA-COMP:10087"/>
        <dbReference type="ChEBI" id="CHEBI:65314"/>
        <dbReference type="ChEBI" id="CHEBI:65315"/>
        <dbReference type="EC" id="5.4.99.12"/>
    </reaction>
</comment>
<comment type="subunit">
    <text evidence="1">Homodimer.</text>
</comment>
<comment type="similarity">
    <text evidence="1">Belongs to the tRNA pseudouridine synthase TruA family.</text>
</comment>
<proteinExistence type="inferred from homology"/>
<evidence type="ECO:0000255" key="1">
    <source>
        <dbReference type="HAMAP-Rule" id="MF_00171"/>
    </source>
</evidence>